<proteinExistence type="inferred from homology"/>
<reference key="1">
    <citation type="journal article" date="1998" name="Science">
        <title>Genome sequence of the nematode C. elegans: a platform for investigating biology.</title>
        <authorList>
            <consortium name="The C. elegans sequencing consortium"/>
        </authorList>
    </citation>
    <scope>NUCLEOTIDE SEQUENCE [LARGE SCALE GENOMIC DNA]</scope>
    <source>
        <strain>Bristol N2</strain>
    </source>
</reference>
<feature type="signal peptide" evidence="2">
    <location>
        <begin position="1"/>
        <end position="18"/>
    </location>
</feature>
<feature type="chain" id="PRO_0000035898" description="Putative tyrosinase-like protein tyr-3">
    <location>
        <begin position="19"/>
        <end position="693"/>
    </location>
</feature>
<feature type="domain" description="ShKT 1" evidence="3">
    <location>
        <begin position="472"/>
        <end position="506"/>
    </location>
</feature>
<feature type="domain" description="ShKT 2" evidence="3">
    <location>
        <begin position="516"/>
        <end position="550"/>
    </location>
</feature>
<feature type="domain" description="ShKT 3" evidence="3">
    <location>
        <begin position="591"/>
        <end position="625"/>
    </location>
</feature>
<feature type="domain" description="ShKT 4" evidence="3">
    <location>
        <begin position="634"/>
        <end position="667"/>
    </location>
</feature>
<feature type="binding site" evidence="1">
    <location>
        <position position="142"/>
    </location>
    <ligand>
        <name>Cu cation</name>
        <dbReference type="ChEBI" id="CHEBI:23378"/>
        <label>A</label>
    </ligand>
</feature>
<feature type="binding site" evidence="1">
    <location>
        <position position="152"/>
    </location>
    <ligand>
        <name>Cu cation</name>
        <dbReference type="ChEBI" id="CHEBI:23378"/>
        <label>A</label>
    </ligand>
</feature>
<feature type="binding site" evidence="1">
    <location>
        <position position="161"/>
    </location>
    <ligand>
        <name>Cu cation</name>
        <dbReference type="ChEBI" id="CHEBI:23378"/>
        <label>A</label>
    </ligand>
</feature>
<feature type="binding site" evidence="1">
    <location>
        <position position="281"/>
    </location>
    <ligand>
        <name>Cu cation</name>
        <dbReference type="ChEBI" id="CHEBI:23378"/>
        <label>B</label>
    </ligand>
</feature>
<feature type="binding site" evidence="1">
    <location>
        <position position="285"/>
    </location>
    <ligand>
        <name>Cu cation</name>
        <dbReference type="ChEBI" id="CHEBI:23378"/>
        <label>B</label>
    </ligand>
</feature>
<feature type="binding site" evidence="1">
    <location>
        <position position="308"/>
    </location>
    <ligand>
        <name>Cu cation</name>
        <dbReference type="ChEBI" id="CHEBI:23378"/>
        <label>B</label>
    </ligand>
</feature>
<feature type="disulfide bond" evidence="3">
    <location>
        <begin position="472"/>
        <end position="506"/>
    </location>
</feature>
<feature type="disulfide bond" evidence="3">
    <location>
        <begin position="479"/>
        <end position="499"/>
    </location>
</feature>
<feature type="disulfide bond" evidence="3">
    <location>
        <begin position="488"/>
        <end position="503"/>
    </location>
</feature>
<feature type="disulfide bond" evidence="3">
    <location>
        <begin position="516"/>
        <end position="550"/>
    </location>
</feature>
<feature type="disulfide bond" evidence="3">
    <location>
        <begin position="523"/>
        <end position="543"/>
    </location>
</feature>
<feature type="disulfide bond" evidence="3">
    <location>
        <begin position="532"/>
        <end position="547"/>
    </location>
</feature>
<feature type="disulfide bond" evidence="3">
    <location>
        <begin position="591"/>
        <end position="625"/>
    </location>
</feature>
<feature type="disulfide bond" evidence="3">
    <location>
        <begin position="598"/>
        <end position="618"/>
    </location>
</feature>
<feature type="disulfide bond" evidence="3">
    <location>
        <begin position="607"/>
        <end position="622"/>
    </location>
</feature>
<feature type="disulfide bond" evidence="3">
    <location>
        <begin position="634"/>
        <end position="667"/>
    </location>
</feature>
<feature type="disulfide bond" evidence="3">
    <location>
        <begin position="641"/>
        <end position="660"/>
    </location>
</feature>
<feature type="disulfide bond" evidence="3">
    <location>
        <begin position="650"/>
        <end position="664"/>
    </location>
</feature>
<protein>
    <recommendedName>
        <fullName>Putative tyrosinase-like protein tyr-3</fullName>
    </recommendedName>
</protein>
<keyword id="KW-0186">Copper</keyword>
<keyword id="KW-1015">Disulfide bond</keyword>
<keyword id="KW-0479">Metal-binding</keyword>
<keyword id="KW-0503">Monooxygenase</keyword>
<keyword id="KW-0560">Oxidoreductase</keyword>
<keyword id="KW-1185">Reference proteome</keyword>
<keyword id="KW-0677">Repeat</keyword>
<keyword id="KW-0732">Signal</keyword>
<comment type="cofactor">
    <cofactor evidence="1">
        <name>Cu(2+)</name>
        <dbReference type="ChEBI" id="CHEBI:29036"/>
    </cofactor>
    <text evidence="1">Binds 2 copper ions per subunit.</text>
</comment>
<comment type="similarity">
    <text evidence="4">Belongs to the tyrosinase family.</text>
</comment>
<dbReference type="EMBL" id="Z71261">
    <property type="protein sequence ID" value="CAA95805.2"/>
    <property type="molecule type" value="Genomic_DNA"/>
</dbReference>
<dbReference type="PIR" id="T21192">
    <property type="entry name" value="T21192"/>
</dbReference>
<dbReference type="RefSeq" id="NP_492055.2">
    <property type="nucleotide sequence ID" value="NM_059654.5"/>
</dbReference>
<dbReference type="SMR" id="Q19673"/>
<dbReference type="BioGRID" id="37914">
    <property type="interactions" value="1"/>
</dbReference>
<dbReference type="FunCoup" id="Q19673">
    <property type="interactions" value="12"/>
</dbReference>
<dbReference type="STRING" id="6239.F21C3.2.1"/>
<dbReference type="PaxDb" id="6239-F21C3.2"/>
<dbReference type="PeptideAtlas" id="Q19673"/>
<dbReference type="EnsemblMetazoa" id="F21C3.2.1">
    <property type="protein sequence ID" value="F21C3.2.1"/>
    <property type="gene ID" value="WBGene00009001"/>
</dbReference>
<dbReference type="GeneID" id="172472"/>
<dbReference type="KEGG" id="cel:CELE_F21C3.2"/>
<dbReference type="UCSC" id="F21C3.2">
    <property type="organism name" value="c. elegans"/>
</dbReference>
<dbReference type="AGR" id="WB:WBGene00009001"/>
<dbReference type="CTD" id="172472"/>
<dbReference type="WormBase" id="F21C3.2">
    <property type="protein sequence ID" value="CE42097"/>
    <property type="gene ID" value="WBGene00009001"/>
    <property type="gene designation" value="tyr-3"/>
</dbReference>
<dbReference type="eggNOG" id="ENOG502QRET">
    <property type="taxonomic scope" value="Eukaryota"/>
</dbReference>
<dbReference type="HOGENOM" id="CLU_020332_0_0_1"/>
<dbReference type="InParanoid" id="Q19673"/>
<dbReference type="OMA" id="WTNEFMG"/>
<dbReference type="OrthoDB" id="6132182at2759"/>
<dbReference type="PhylomeDB" id="Q19673"/>
<dbReference type="Reactome" id="R-CEL-5662702">
    <property type="pathway name" value="Melanin biosynthesis"/>
</dbReference>
<dbReference type="PRO" id="PR:Q19673"/>
<dbReference type="Proteomes" id="UP000001940">
    <property type="component" value="Chromosome I"/>
</dbReference>
<dbReference type="GO" id="GO:0046872">
    <property type="term" value="F:metal ion binding"/>
    <property type="evidence" value="ECO:0007669"/>
    <property type="project" value="UniProtKB-KW"/>
</dbReference>
<dbReference type="GO" id="GO:0004497">
    <property type="term" value="F:monooxygenase activity"/>
    <property type="evidence" value="ECO:0007669"/>
    <property type="project" value="UniProtKB-KW"/>
</dbReference>
<dbReference type="Gene3D" id="1.10.1280.10">
    <property type="entry name" value="Di-copper center containing domain from catechol oxidase"/>
    <property type="match status" value="1"/>
</dbReference>
<dbReference type="InterPro" id="IPR008922">
    <property type="entry name" value="Di-copper_centre_dom_sf"/>
</dbReference>
<dbReference type="InterPro" id="IPR003582">
    <property type="entry name" value="ShKT_dom"/>
</dbReference>
<dbReference type="InterPro" id="IPR050316">
    <property type="entry name" value="Tyrosinase/Hemocyanin"/>
</dbReference>
<dbReference type="InterPro" id="IPR002227">
    <property type="entry name" value="Tyrosinase_Cu-bd"/>
</dbReference>
<dbReference type="PANTHER" id="PTHR11474">
    <property type="entry name" value="TYROSINASE FAMILY MEMBER"/>
    <property type="match status" value="1"/>
</dbReference>
<dbReference type="PANTHER" id="PTHR11474:SF114">
    <property type="entry name" value="TYROSINASE-LIKE PROTEIN TYR-3-RELATED"/>
    <property type="match status" value="1"/>
</dbReference>
<dbReference type="Pfam" id="PF01549">
    <property type="entry name" value="ShK"/>
    <property type="match status" value="4"/>
</dbReference>
<dbReference type="Pfam" id="PF00264">
    <property type="entry name" value="Tyrosinase"/>
    <property type="match status" value="1"/>
</dbReference>
<dbReference type="PRINTS" id="PR00092">
    <property type="entry name" value="TYROSINASE"/>
</dbReference>
<dbReference type="SMART" id="SM00254">
    <property type="entry name" value="ShKT"/>
    <property type="match status" value="4"/>
</dbReference>
<dbReference type="SUPFAM" id="SSF48056">
    <property type="entry name" value="Di-copper centre-containing domain"/>
    <property type="match status" value="1"/>
</dbReference>
<dbReference type="PROSITE" id="PS51670">
    <property type="entry name" value="SHKT"/>
    <property type="match status" value="4"/>
</dbReference>
<dbReference type="PROSITE" id="PS00497">
    <property type="entry name" value="TYROSINASE_1"/>
    <property type="match status" value="1"/>
</dbReference>
<dbReference type="PROSITE" id="PS00498">
    <property type="entry name" value="TYROSINASE_2"/>
    <property type="match status" value="1"/>
</dbReference>
<sequence>MIRYIILLVYFLIFEVNSQLDCSKAPTPAIRIMCNQIQRWDQKARATPSLSGDVKTPGIAGKAMAAEFSPIASNVFQCMDIACLCVFFRGTGGNNCVVQGRPLGKVVRKEYRMLSDDERQRLHQAFRTLKQNGEYDRLARVHAQYSESGAAHSGPAFLPWHREFVKRMEFLIRQVDPSLHLPYWDSSLDQNLPDSKDSILWTNEFMGDANGEVNNGPFRSWKTVENKPAITRAVGAQGKGYSEDEINTMLGQTDIAQVLAFSAPQRGCPYQPNFNVPEYTHGNPHIYVGGDMLETSTAANDPIFWMHHSFVDLLWEMYRQSKQTRATRETAYPADNRQCSSEHHFRAAFMRPFTPMRNADGLSNMYTDNLYSYAPRPSCNAGPTCGSPYLFCDKSHGAPRCAVRMKPEGNCASFKNGEDACYQGSCQSGKCVAGSQNVTPPPTIQPTKPVVTVEVFSETCLKIRLKFFQTSCFNENECCGPWSAKGECQKNPVYMNVWCKASCRQCTPNYNINEECSDRHTNCAMWSRSGECNKNPLWMSENCRSSCQKCGRSRAATCGGGGGADSISNPTTMPPATNNGQQNTPCDSPMCYNEDQCCPIWAQRGQCRSNPGYMTCQCKVSCGVCRPNYVYGPCADYHYDCAAWARRGECLKNKWMPENCRRSCNTCVNQQQLAARCATRIVRSAFLELIRMK</sequence>
<gene>
    <name type="primary">tyr-3</name>
    <name type="ORF">F21C3.2</name>
</gene>
<accession>Q19673</accession>
<evidence type="ECO:0000250" key="1">
    <source>
        <dbReference type="UniProtKB" id="Q9ZP19"/>
    </source>
</evidence>
<evidence type="ECO:0000255" key="2"/>
<evidence type="ECO:0000255" key="3">
    <source>
        <dbReference type="PROSITE-ProRule" id="PRU01005"/>
    </source>
</evidence>
<evidence type="ECO:0000305" key="4"/>
<organism>
    <name type="scientific">Caenorhabditis elegans</name>
    <dbReference type="NCBI Taxonomy" id="6239"/>
    <lineage>
        <taxon>Eukaryota</taxon>
        <taxon>Metazoa</taxon>
        <taxon>Ecdysozoa</taxon>
        <taxon>Nematoda</taxon>
        <taxon>Chromadorea</taxon>
        <taxon>Rhabditida</taxon>
        <taxon>Rhabditina</taxon>
        <taxon>Rhabditomorpha</taxon>
        <taxon>Rhabditoidea</taxon>
        <taxon>Rhabditidae</taxon>
        <taxon>Peloderinae</taxon>
        <taxon>Caenorhabditis</taxon>
    </lineage>
</organism>
<name>TYR3_CAEEL</name>